<reference key="1">
    <citation type="journal article" date="2007" name="Genome Biol.">
        <title>Genome analysis and genome-wide proteomics of Thermococcus gammatolerans, the most radioresistant organism known amongst the Archaea.</title>
        <authorList>
            <person name="Zivanovic Y."/>
            <person name="Armengaud J."/>
            <person name="Lagorce A."/>
            <person name="Leplat C."/>
            <person name="Guerin P."/>
            <person name="Dutertre M."/>
            <person name="Anthouard V."/>
            <person name="Forterre P."/>
            <person name="Wincker P."/>
            <person name="Confalonieri F."/>
        </authorList>
    </citation>
    <scope>NUCLEOTIDE SEQUENCE [LARGE SCALE GENOMIC DNA]</scope>
    <source>
        <strain>DSM 15229 / JCM 11827 / EJ3</strain>
    </source>
</reference>
<proteinExistence type="inferred from homology"/>
<comment type="catalytic activity">
    <reaction evidence="1">
        <text>alpha-D-glucose 6-phosphate = beta-D-fructose 6-phosphate</text>
        <dbReference type="Rhea" id="RHEA:11816"/>
        <dbReference type="ChEBI" id="CHEBI:57634"/>
        <dbReference type="ChEBI" id="CHEBI:58225"/>
        <dbReference type="EC" id="5.3.1.9"/>
    </reaction>
</comment>
<comment type="pathway">
    <text evidence="1">Carbohydrate degradation; glycolysis; D-glyceraldehyde 3-phosphate and glycerone phosphate from D-glucose: step 2/4.</text>
</comment>
<comment type="subunit">
    <text evidence="1">Homodimer.</text>
</comment>
<comment type="subcellular location">
    <subcellularLocation>
        <location evidence="1">Cytoplasm</location>
    </subcellularLocation>
</comment>
<comment type="similarity">
    <text evidence="1">Belongs to the archaeal-type GPI family.</text>
</comment>
<sequence>MEYKRPFGVKIDLETGVIPGAKRIVRKLSDMRGYFVDEEAYEKLLREDPVVYEVYAIEQEEREGDLNFATTVLYPGKVGKEFFFTKGHYHAKADRAEIYYALKGKGGMLLQTPEGEAEWIPMEPGTVVYVPPYWAHRTVNTGGEPFVFLAIYPADAGHDYGSIKEKGFSKIVIDEGGEVKIVDNPRWSV</sequence>
<evidence type="ECO:0000255" key="1">
    <source>
        <dbReference type="HAMAP-Rule" id="MF_01410"/>
    </source>
</evidence>
<accession>C5A5R8</accession>
<protein>
    <recommendedName>
        <fullName evidence="1">Glucose-6-phosphate isomerase</fullName>
        <shortName evidence="1">GPI</shortName>
        <ecNumber evidence="1">5.3.1.9</ecNumber>
    </recommendedName>
    <alternativeName>
        <fullName evidence="1">Phosphoglucose isomerase</fullName>
        <shortName evidence="1">PGI</shortName>
    </alternativeName>
    <alternativeName>
        <fullName evidence="1">Phosphohexose isomerase</fullName>
        <shortName evidence="1">PHI</shortName>
    </alternativeName>
</protein>
<name>GPI_THEGJ</name>
<keyword id="KW-0963">Cytoplasm</keyword>
<keyword id="KW-0312">Gluconeogenesis</keyword>
<keyword id="KW-0324">Glycolysis</keyword>
<keyword id="KW-0408">Iron</keyword>
<keyword id="KW-0413">Isomerase</keyword>
<keyword id="KW-0479">Metal-binding</keyword>
<keyword id="KW-1185">Reference proteome</keyword>
<dbReference type="EC" id="5.3.1.9" evidence="1"/>
<dbReference type="EMBL" id="CP001398">
    <property type="protein sequence ID" value="ACS33580.1"/>
    <property type="molecule type" value="Genomic_DNA"/>
</dbReference>
<dbReference type="RefSeq" id="WP_015858693.1">
    <property type="nucleotide sequence ID" value="NC_012804.1"/>
</dbReference>
<dbReference type="SMR" id="C5A5R8"/>
<dbReference type="STRING" id="593117.TGAM_1078"/>
<dbReference type="PaxDb" id="593117-TGAM_1078"/>
<dbReference type="GeneID" id="7986952"/>
<dbReference type="KEGG" id="tga:TGAM_1078"/>
<dbReference type="PATRIC" id="fig|593117.10.peg.1077"/>
<dbReference type="eggNOG" id="arCOG02602">
    <property type="taxonomic scope" value="Archaea"/>
</dbReference>
<dbReference type="HOGENOM" id="CLU_105797_0_0_2"/>
<dbReference type="OrthoDB" id="49661at2157"/>
<dbReference type="UniPathway" id="UPA00109">
    <property type="reaction ID" value="UER00181"/>
</dbReference>
<dbReference type="Proteomes" id="UP000001488">
    <property type="component" value="Chromosome"/>
</dbReference>
<dbReference type="GO" id="GO:0005737">
    <property type="term" value="C:cytoplasm"/>
    <property type="evidence" value="ECO:0007669"/>
    <property type="project" value="UniProtKB-SubCell"/>
</dbReference>
<dbReference type="GO" id="GO:0004347">
    <property type="term" value="F:glucose-6-phosphate isomerase activity"/>
    <property type="evidence" value="ECO:0007669"/>
    <property type="project" value="UniProtKB-UniRule"/>
</dbReference>
<dbReference type="GO" id="GO:0005506">
    <property type="term" value="F:iron ion binding"/>
    <property type="evidence" value="ECO:0007669"/>
    <property type="project" value="InterPro"/>
</dbReference>
<dbReference type="GO" id="GO:0006094">
    <property type="term" value="P:gluconeogenesis"/>
    <property type="evidence" value="ECO:0007669"/>
    <property type="project" value="UniProtKB-UniRule"/>
</dbReference>
<dbReference type="GO" id="GO:0006096">
    <property type="term" value="P:glycolytic process"/>
    <property type="evidence" value="ECO:0007669"/>
    <property type="project" value="UniProtKB-UniRule"/>
</dbReference>
<dbReference type="CDD" id="cd02218">
    <property type="entry name" value="cupin_PGI"/>
    <property type="match status" value="1"/>
</dbReference>
<dbReference type="Gene3D" id="2.60.120.10">
    <property type="entry name" value="Jelly Rolls"/>
    <property type="match status" value="1"/>
</dbReference>
<dbReference type="HAMAP" id="MF_01410">
    <property type="entry name" value="G6P_isomerase_arch"/>
    <property type="match status" value="1"/>
</dbReference>
<dbReference type="InterPro" id="IPR016758">
    <property type="entry name" value="G6P_isomerase_archaea/bacteria"/>
</dbReference>
<dbReference type="InterPro" id="IPR010551">
    <property type="entry name" value="G6P_isomerase_prok"/>
</dbReference>
<dbReference type="InterPro" id="IPR051610">
    <property type="entry name" value="GPI/OXD"/>
</dbReference>
<dbReference type="InterPro" id="IPR014710">
    <property type="entry name" value="RmlC-like_jellyroll"/>
</dbReference>
<dbReference type="InterPro" id="IPR011051">
    <property type="entry name" value="RmlC_Cupin_sf"/>
</dbReference>
<dbReference type="PANTHER" id="PTHR35848:SF6">
    <property type="entry name" value="CUPIN TYPE-2 DOMAIN-CONTAINING PROTEIN"/>
    <property type="match status" value="1"/>
</dbReference>
<dbReference type="PANTHER" id="PTHR35848">
    <property type="entry name" value="OXALATE-BINDING PROTEIN"/>
    <property type="match status" value="1"/>
</dbReference>
<dbReference type="Pfam" id="PF06560">
    <property type="entry name" value="GPI"/>
    <property type="match status" value="1"/>
</dbReference>
<dbReference type="PIRSF" id="PIRSF019325">
    <property type="entry name" value="Glucose-6-phosphate_isomerase"/>
    <property type="match status" value="1"/>
</dbReference>
<dbReference type="SUPFAM" id="SSF51182">
    <property type="entry name" value="RmlC-like cupins"/>
    <property type="match status" value="1"/>
</dbReference>
<organism>
    <name type="scientific">Thermococcus gammatolerans (strain DSM 15229 / JCM 11827 / EJ3)</name>
    <dbReference type="NCBI Taxonomy" id="593117"/>
    <lineage>
        <taxon>Archaea</taxon>
        <taxon>Methanobacteriati</taxon>
        <taxon>Methanobacteriota</taxon>
        <taxon>Thermococci</taxon>
        <taxon>Thermococcales</taxon>
        <taxon>Thermococcaceae</taxon>
        <taxon>Thermococcus</taxon>
    </lineage>
</organism>
<gene>
    <name evidence="1" type="primary">pgiA</name>
    <name type="ordered locus">TGAM_1078</name>
</gene>
<feature type="chain" id="PRO_1000215221" description="Glucose-6-phosphate isomerase">
    <location>
        <begin position="1"/>
        <end position="189"/>
    </location>
</feature>
<feature type="binding site" evidence="1">
    <location>
        <position position="88"/>
    </location>
    <ligand>
        <name>Fe cation</name>
        <dbReference type="ChEBI" id="CHEBI:24875"/>
    </ligand>
</feature>
<feature type="binding site" evidence="1">
    <location>
        <position position="90"/>
    </location>
    <ligand>
        <name>Fe cation</name>
        <dbReference type="ChEBI" id="CHEBI:24875"/>
    </ligand>
</feature>
<feature type="binding site" evidence="1">
    <location>
        <position position="97"/>
    </location>
    <ligand>
        <name>Fe cation</name>
        <dbReference type="ChEBI" id="CHEBI:24875"/>
    </ligand>
</feature>
<feature type="binding site" evidence="1">
    <location>
        <position position="136"/>
    </location>
    <ligand>
        <name>Fe cation</name>
        <dbReference type="ChEBI" id="CHEBI:24875"/>
    </ligand>
</feature>